<comment type="function">
    <text evidence="1">Involved in the regulation of glutamine synthetase GlnA, a key enzyme in the process to assimilate ammonia. When cellular nitrogen levels are high, the C-terminal adenylyl transferase (AT) inactivates GlnA by covalent transfer of an adenylyl group from ATP to specific tyrosine residue of GlnA, thus reducing its activity. Conversely, when nitrogen levels are low, the N-terminal adenylyl removase (AR) activates GlnA by removing the adenylyl group by phosphorolysis, increasing its activity. The regulatory region of GlnE binds the signal transduction protein PII (GlnB) which indicates the nitrogen status of the cell.</text>
</comment>
<comment type="catalytic activity">
    <reaction evidence="1">
        <text>[glutamine synthetase]-O(4)-(5'-adenylyl)-L-tyrosine + phosphate = [glutamine synthetase]-L-tyrosine + ADP</text>
        <dbReference type="Rhea" id="RHEA:43716"/>
        <dbReference type="Rhea" id="RHEA-COMP:10660"/>
        <dbReference type="Rhea" id="RHEA-COMP:10661"/>
        <dbReference type="ChEBI" id="CHEBI:43474"/>
        <dbReference type="ChEBI" id="CHEBI:46858"/>
        <dbReference type="ChEBI" id="CHEBI:83624"/>
        <dbReference type="ChEBI" id="CHEBI:456216"/>
        <dbReference type="EC" id="2.7.7.89"/>
    </reaction>
</comment>
<comment type="catalytic activity">
    <reaction evidence="1">
        <text>[glutamine synthetase]-L-tyrosine + ATP = [glutamine synthetase]-O(4)-(5'-adenylyl)-L-tyrosine + diphosphate</text>
        <dbReference type="Rhea" id="RHEA:18589"/>
        <dbReference type="Rhea" id="RHEA-COMP:10660"/>
        <dbReference type="Rhea" id="RHEA-COMP:10661"/>
        <dbReference type="ChEBI" id="CHEBI:30616"/>
        <dbReference type="ChEBI" id="CHEBI:33019"/>
        <dbReference type="ChEBI" id="CHEBI:46858"/>
        <dbReference type="ChEBI" id="CHEBI:83624"/>
        <dbReference type="EC" id="2.7.7.42"/>
    </reaction>
</comment>
<comment type="cofactor">
    <cofactor evidence="1">
        <name>Mg(2+)</name>
        <dbReference type="ChEBI" id="CHEBI:18420"/>
    </cofactor>
</comment>
<comment type="similarity">
    <text evidence="1">Belongs to the GlnE family.</text>
</comment>
<dbReference type="EC" id="2.7.7.89" evidence="1"/>
<dbReference type="EC" id="2.7.7.42" evidence="1"/>
<dbReference type="EMBL" id="AE000516">
    <property type="protein sequence ID" value="AAK46564.1"/>
    <property type="molecule type" value="Genomic_DNA"/>
</dbReference>
<dbReference type="PIR" id="A70776">
    <property type="entry name" value="A70776"/>
</dbReference>
<dbReference type="RefSeq" id="WP_003917603.1">
    <property type="nucleotide sequence ID" value="NC_002755.2"/>
</dbReference>
<dbReference type="SMR" id="P9WN26"/>
<dbReference type="KEGG" id="mtc:MT2279"/>
<dbReference type="PATRIC" id="fig|83331.31.peg.2453"/>
<dbReference type="HOGENOM" id="CLU_006233_1_0_11"/>
<dbReference type="Proteomes" id="UP000001020">
    <property type="component" value="Chromosome"/>
</dbReference>
<dbReference type="GO" id="GO:0005829">
    <property type="term" value="C:cytosol"/>
    <property type="evidence" value="ECO:0007669"/>
    <property type="project" value="TreeGrafter"/>
</dbReference>
<dbReference type="GO" id="GO:0008882">
    <property type="term" value="F:[glutamate-ammonia-ligase] adenylyltransferase activity"/>
    <property type="evidence" value="ECO:0007669"/>
    <property type="project" value="UniProtKB-UniRule"/>
</dbReference>
<dbReference type="GO" id="GO:0047388">
    <property type="term" value="F:[glutamine synthetase]-adenylyl-L-tyrosine phosphorylase activity"/>
    <property type="evidence" value="ECO:0007669"/>
    <property type="project" value="UniProtKB-EC"/>
</dbReference>
<dbReference type="GO" id="GO:0005524">
    <property type="term" value="F:ATP binding"/>
    <property type="evidence" value="ECO:0007669"/>
    <property type="project" value="UniProtKB-UniRule"/>
</dbReference>
<dbReference type="GO" id="GO:0000287">
    <property type="term" value="F:magnesium ion binding"/>
    <property type="evidence" value="ECO:0007669"/>
    <property type="project" value="UniProtKB-UniRule"/>
</dbReference>
<dbReference type="GO" id="GO:0000820">
    <property type="term" value="P:regulation of glutamine family amino acid metabolic process"/>
    <property type="evidence" value="ECO:0007669"/>
    <property type="project" value="UniProtKB-UniRule"/>
</dbReference>
<dbReference type="CDD" id="cd05401">
    <property type="entry name" value="NT_GlnE_GlnD_like"/>
    <property type="match status" value="2"/>
</dbReference>
<dbReference type="FunFam" id="1.20.120.330:FF:000022">
    <property type="entry name" value="Bifunctional glutamine synthetase adenylyltransferase/adenylyl-removing enzyme"/>
    <property type="match status" value="1"/>
</dbReference>
<dbReference type="FunFam" id="1.20.120.330:FF:000023">
    <property type="entry name" value="Bifunctional glutamine synthetase adenylyltransferase/adenylyl-removing enzyme"/>
    <property type="match status" value="1"/>
</dbReference>
<dbReference type="FunFam" id="3.30.460.10:FF:000055">
    <property type="entry name" value="Bifunctional glutamine synthetase adenylyltransferase/adenylyl-removing enzyme"/>
    <property type="match status" value="1"/>
</dbReference>
<dbReference type="Gene3D" id="3.30.460.10">
    <property type="entry name" value="Beta Polymerase, domain 2"/>
    <property type="match status" value="2"/>
</dbReference>
<dbReference type="Gene3D" id="1.20.120.330">
    <property type="entry name" value="Nucleotidyltransferases domain 2"/>
    <property type="match status" value="2"/>
</dbReference>
<dbReference type="HAMAP" id="MF_00802">
    <property type="entry name" value="GlnE"/>
    <property type="match status" value="1"/>
</dbReference>
<dbReference type="InterPro" id="IPR023057">
    <property type="entry name" value="GlnE"/>
</dbReference>
<dbReference type="InterPro" id="IPR005190">
    <property type="entry name" value="GlnE_rpt_dom"/>
</dbReference>
<dbReference type="InterPro" id="IPR043519">
    <property type="entry name" value="NT_sf"/>
</dbReference>
<dbReference type="InterPro" id="IPR013546">
    <property type="entry name" value="PII_UdlTrfase/GS_AdlTrfase"/>
</dbReference>
<dbReference type="NCBIfam" id="NF010707">
    <property type="entry name" value="PRK14109.1"/>
    <property type="match status" value="1"/>
</dbReference>
<dbReference type="PANTHER" id="PTHR30621:SF0">
    <property type="entry name" value="BIFUNCTIONAL GLUTAMINE SYNTHETASE ADENYLYLTRANSFERASE_ADENYLYL-REMOVING ENZYME"/>
    <property type="match status" value="1"/>
</dbReference>
<dbReference type="PANTHER" id="PTHR30621">
    <property type="entry name" value="GLUTAMINE SYNTHETASE ADENYLYLTRANSFERASE"/>
    <property type="match status" value="1"/>
</dbReference>
<dbReference type="Pfam" id="PF08335">
    <property type="entry name" value="GlnD_UR_UTase"/>
    <property type="match status" value="2"/>
</dbReference>
<dbReference type="Pfam" id="PF03710">
    <property type="entry name" value="GlnE"/>
    <property type="match status" value="2"/>
</dbReference>
<dbReference type="SUPFAM" id="SSF81301">
    <property type="entry name" value="Nucleotidyltransferase"/>
    <property type="match status" value="2"/>
</dbReference>
<dbReference type="SUPFAM" id="SSF81593">
    <property type="entry name" value="Nucleotidyltransferase substrate binding subunit/domain"/>
    <property type="match status" value="2"/>
</dbReference>
<accession>P9WN26</accession>
<accession>L0T8Z5</accession>
<accession>P69942</accession>
<accession>Q10379</accession>
<name>GLNE_MYCTO</name>
<proteinExistence type="inferred from homology"/>
<sequence>MVVTKLATQRPKLPSVGRLGLVDPPAGERLAQLGWDRHEDQAHVDLLWSLSRAPDADAALRALIRLSENPDTGWDELNAALLRERSLRGRLFSVLGSSLALGDHLVAHPQSWKLLRGKVTLPSHDQLQRSFVECVEESEGMPGSLVHRLRTQYRDYVLMLAALDLAATVEDEPVLPFTVVAARLADAADAALAAALRVAEASVCGEHPPPRLAVIAMGKCGARELNYVSDVDVIFVAERSDPRNARVASEMMRVASAAFFEVDAALRPEGRNGELVRTLESHIAYYQRWAKTWEFQALLKARPVVGDAELGERYLTALMPMVWRACEREDFVVEVQAMRRRVEQLVPADVRGRELKLGSGGLRDVEFAVQLLQLVHARSDESLRVASTVDALAALGEGGYIGREDAANMTASYEFLRLLEHRLQLQRLKRTHLLPDPEDEEAVRWLARAAHIRPDGRNDAAGVLREELKKQNVRVSKLHTKLFYQPLLESIGPTGLEIAHGMTLEAAGRRLAALGYEGPQTALKHMSALVNQSGRRGRVQSVLLPRLLDWMSYAPDPDGGLLAYRRLSEALATESWYLATLRDKPAVAKRLMHVLGTSAYVPDLLMRAPRVIQQYEDGPAGPKLLETEPAAVARALIASASRYPDPERAIAGARTLRRRELARIGSADLLGLLEVSEVCRALTSVWVAVLQAALDVMIRASLPDDDRAPAAIAVIGMGRLGGAELGYGSDADVMFVCEPATGVDDARAVKWSTSIAERVRALLGTPSVDPPLELDANLRPEGRNGPLVRTLGSYAAYYEQWAQPWEIQALLRAHAVAGDAELGQRFLRMVDKTRYPPDGVSADSVREIRRIKARIESERLPRGADPNTHTKLGRGGLADIEWTVQLLQLQHAHQVPALHNTSTLQSLDVIAAADLVPAADVELLRQAWLTATRARNALVLVRGKPTDQLPGPGRQLNAVAVAAGWRNDDGGEFLDNYLRVTRRAKAVVRKVFGS</sequence>
<evidence type="ECO:0000255" key="1">
    <source>
        <dbReference type="HAMAP-Rule" id="MF_00802"/>
    </source>
</evidence>
<gene>
    <name evidence="1" type="primary">glnE</name>
    <name type="ordered locus">MT2279</name>
</gene>
<keyword id="KW-0067">ATP-binding</keyword>
<keyword id="KW-0460">Magnesium</keyword>
<keyword id="KW-0511">Multifunctional enzyme</keyword>
<keyword id="KW-0547">Nucleotide-binding</keyword>
<keyword id="KW-0548">Nucleotidyltransferase</keyword>
<keyword id="KW-1185">Reference proteome</keyword>
<keyword id="KW-0808">Transferase</keyword>
<organism>
    <name type="scientific">Mycobacterium tuberculosis (strain CDC 1551 / Oshkosh)</name>
    <dbReference type="NCBI Taxonomy" id="83331"/>
    <lineage>
        <taxon>Bacteria</taxon>
        <taxon>Bacillati</taxon>
        <taxon>Actinomycetota</taxon>
        <taxon>Actinomycetes</taxon>
        <taxon>Mycobacteriales</taxon>
        <taxon>Mycobacteriaceae</taxon>
        <taxon>Mycobacterium</taxon>
        <taxon>Mycobacterium tuberculosis complex</taxon>
    </lineage>
</organism>
<feature type="chain" id="PRO_0000427200" description="Bifunctional glutamine synthetase adenylyltransferase/adenylyl-removing enzyme">
    <location>
        <begin position="1"/>
        <end position="994"/>
    </location>
</feature>
<feature type="region of interest" description="Adenylyl removase" evidence="1">
    <location>
        <begin position="1"/>
        <end position="487"/>
    </location>
</feature>
<feature type="region of interest" description="Adenylyl transferase" evidence="1">
    <location>
        <begin position="492"/>
        <end position="994"/>
    </location>
</feature>
<reference key="1">
    <citation type="journal article" date="2002" name="J. Bacteriol.">
        <title>Whole-genome comparison of Mycobacterium tuberculosis clinical and laboratory strains.</title>
        <authorList>
            <person name="Fleischmann R.D."/>
            <person name="Alland D."/>
            <person name="Eisen J.A."/>
            <person name="Carpenter L."/>
            <person name="White O."/>
            <person name="Peterson J.D."/>
            <person name="DeBoy R.T."/>
            <person name="Dodson R.J."/>
            <person name="Gwinn M.L."/>
            <person name="Haft D.H."/>
            <person name="Hickey E.K."/>
            <person name="Kolonay J.F."/>
            <person name="Nelson W.C."/>
            <person name="Umayam L.A."/>
            <person name="Ermolaeva M.D."/>
            <person name="Salzberg S.L."/>
            <person name="Delcher A."/>
            <person name="Utterback T.R."/>
            <person name="Weidman J.F."/>
            <person name="Khouri H.M."/>
            <person name="Gill J."/>
            <person name="Mikula A."/>
            <person name="Bishai W."/>
            <person name="Jacobs W.R. Jr."/>
            <person name="Venter J.C."/>
            <person name="Fraser C.M."/>
        </authorList>
    </citation>
    <scope>NUCLEOTIDE SEQUENCE [LARGE SCALE GENOMIC DNA]</scope>
    <source>
        <strain>CDC 1551 / Oshkosh</strain>
    </source>
</reference>
<protein>
    <recommendedName>
        <fullName evidence="1">Bifunctional glutamine synthetase adenylyltransferase/adenylyl-removing enzyme</fullName>
    </recommendedName>
    <alternativeName>
        <fullName evidence="1">ATP:glutamine synthetase adenylyltransferase</fullName>
    </alternativeName>
    <alternativeName>
        <fullName evidence="1">ATase</fullName>
    </alternativeName>
    <domain>
        <recommendedName>
            <fullName evidence="1">Glutamine synthetase adenylyl-L-tyrosine phosphorylase</fullName>
            <ecNumber evidence="1">2.7.7.89</ecNumber>
        </recommendedName>
        <alternativeName>
            <fullName evidence="1">Adenylyl removase</fullName>
            <shortName evidence="1">AR</shortName>
            <shortName evidence="1">AT-N</shortName>
        </alternativeName>
    </domain>
    <domain>
        <recommendedName>
            <fullName evidence="1">Glutamine synthetase adenylyl transferase</fullName>
            <ecNumber evidence="1">2.7.7.42</ecNumber>
        </recommendedName>
        <alternativeName>
            <fullName evidence="1">Adenylyl transferase</fullName>
            <shortName evidence="1">AT</shortName>
            <shortName evidence="1">AT-C</shortName>
        </alternativeName>
    </domain>
</protein>